<reference evidence="29" key="1">
    <citation type="journal article" date="2000" name="Science">
        <title>The genome sequence of Drosophila melanogaster.</title>
        <authorList>
            <person name="Adams M.D."/>
            <person name="Celniker S.E."/>
            <person name="Holt R.A."/>
            <person name="Evans C.A."/>
            <person name="Gocayne J.D."/>
            <person name="Amanatides P.G."/>
            <person name="Scherer S.E."/>
            <person name="Li P.W."/>
            <person name="Hoskins R.A."/>
            <person name="Galle R.F."/>
            <person name="George R.A."/>
            <person name="Lewis S.E."/>
            <person name="Richards S."/>
            <person name="Ashburner M."/>
            <person name="Henderson S.N."/>
            <person name="Sutton G.G."/>
            <person name="Wortman J.R."/>
            <person name="Yandell M.D."/>
            <person name="Zhang Q."/>
            <person name="Chen L.X."/>
            <person name="Brandon R.C."/>
            <person name="Rogers Y.-H.C."/>
            <person name="Blazej R.G."/>
            <person name="Champe M."/>
            <person name="Pfeiffer B.D."/>
            <person name="Wan K.H."/>
            <person name="Doyle C."/>
            <person name="Baxter E.G."/>
            <person name="Helt G."/>
            <person name="Nelson C.R."/>
            <person name="Miklos G.L.G."/>
            <person name="Abril J.F."/>
            <person name="Agbayani A."/>
            <person name="An H.-J."/>
            <person name="Andrews-Pfannkoch C."/>
            <person name="Baldwin D."/>
            <person name="Ballew R.M."/>
            <person name="Basu A."/>
            <person name="Baxendale J."/>
            <person name="Bayraktaroglu L."/>
            <person name="Beasley E.M."/>
            <person name="Beeson K.Y."/>
            <person name="Benos P.V."/>
            <person name="Berman B.P."/>
            <person name="Bhandari D."/>
            <person name="Bolshakov S."/>
            <person name="Borkova D."/>
            <person name="Botchan M.R."/>
            <person name="Bouck J."/>
            <person name="Brokstein P."/>
            <person name="Brottier P."/>
            <person name="Burtis K.C."/>
            <person name="Busam D.A."/>
            <person name="Butler H."/>
            <person name="Cadieu E."/>
            <person name="Center A."/>
            <person name="Chandra I."/>
            <person name="Cherry J.M."/>
            <person name="Cawley S."/>
            <person name="Dahlke C."/>
            <person name="Davenport L.B."/>
            <person name="Davies P."/>
            <person name="de Pablos B."/>
            <person name="Delcher A."/>
            <person name="Deng Z."/>
            <person name="Mays A.D."/>
            <person name="Dew I."/>
            <person name="Dietz S.M."/>
            <person name="Dodson K."/>
            <person name="Doup L.E."/>
            <person name="Downes M."/>
            <person name="Dugan-Rocha S."/>
            <person name="Dunkov B.C."/>
            <person name="Dunn P."/>
            <person name="Durbin K.J."/>
            <person name="Evangelista C.C."/>
            <person name="Ferraz C."/>
            <person name="Ferriera S."/>
            <person name="Fleischmann W."/>
            <person name="Fosler C."/>
            <person name="Gabrielian A.E."/>
            <person name="Garg N.S."/>
            <person name="Gelbart W.M."/>
            <person name="Glasser K."/>
            <person name="Glodek A."/>
            <person name="Gong F."/>
            <person name="Gorrell J.H."/>
            <person name="Gu Z."/>
            <person name="Guan P."/>
            <person name="Harris M."/>
            <person name="Harris N.L."/>
            <person name="Harvey D.A."/>
            <person name="Heiman T.J."/>
            <person name="Hernandez J.R."/>
            <person name="Houck J."/>
            <person name="Hostin D."/>
            <person name="Houston K.A."/>
            <person name="Howland T.J."/>
            <person name="Wei M.-H."/>
            <person name="Ibegwam C."/>
            <person name="Jalali M."/>
            <person name="Kalush F."/>
            <person name="Karpen G.H."/>
            <person name="Ke Z."/>
            <person name="Kennison J.A."/>
            <person name="Ketchum K.A."/>
            <person name="Kimmel B.E."/>
            <person name="Kodira C.D."/>
            <person name="Kraft C.L."/>
            <person name="Kravitz S."/>
            <person name="Kulp D."/>
            <person name="Lai Z."/>
            <person name="Lasko P."/>
            <person name="Lei Y."/>
            <person name="Levitsky A.A."/>
            <person name="Li J.H."/>
            <person name="Li Z."/>
            <person name="Liang Y."/>
            <person name="Lin X."/>
            <person name="Liu X."/>
            <person name="Mattei B."/>
            <person name="McIntosh T.C."/>
            <person name="McLeod M.P."/>
            <person name="McPherson D."/>
            <person name="Merkulov G."/>
            <person name="Milshina N.V."/>
            <person name="Mobarry C."/>
            <person name="Morris J."/>
            <person name="Moshrefi A."/>
            <person name="Mount S.M."/>
            <person name="Moy M."/>
            <person name="Murphy B."/>
            <person name="Murphy L."/>
            <person name="Muzny D.M."/>
            <person name="Nelson D.L."/>
            <person name="Nelson D.R."/>
            <person name="Nelson K.A."/>
            <person name="Nixon K."/>
            <person name="Nusskern D.R."/>
            <person name="Pacleb J.M."/>
            <person name="Palazzolo M."/>
            <person name="Pittman G.S."/>
            <person name="Pan S."/>
            <person name="Pollard J."/>
            <person name="Puri V."/>
            <person name="Reese M.G."/>
            <person name="Reinert K."/>
            <person name="Remington K."/>
            <person name="Saunders R.D.C."/>
            <person name="Scheeler F."/>
            <person name="Shen H."/>
            <person name="Shue B.C."/>
            <person name="Siden-Kiamos I."/>
            <person name="Simpson M."/>
            <person name="Skupski M.P."/>
            <person name="Smith T.J."/>
            <person name="Spier E."/>
            <person name="Spradling A.C."/>
            <person name="Stapleton M."/>
            <person name="Strong R."/>
            <person name="Sun E."/>
            <person name="Svirskas R."/>
            <person name="Tector C."/>
            <person name="Turner R."/>
            <person name="Venter E."/>
            <person name="Wang A.H."/>
            <person name="Wang X."/>
            <person name="Wang Z.-Y."/>
            <person name="Wassarman D.A."/>
            <person name="Weinstock G.M."/>
            <person name="Weissenbach J."/>
            <person name="Williams S.M."/>
            <person name="Woodage T."/>
            <person name="Worley K.C."/>
            <person name="Wu D."/>
            <person name="Yang S."/>
            <person name="Yao Q.A."/>
            <person name="Ye J."/>
            <person name="Yeh R.-F."/>
            <person name="Zaveri J.S."/>
            <person name="Zhan M."/>
            <person name="Zhang G."/>
            <person name="Zhao Q."/>
            <person name="Zheng L."/>
            <person name="Zheng X.H."/>
            <person name="Zhong F.N."/>
            <person name="Zhong W."/>
            <person name="Zhou X."/>
            <person name="Zhu S.C."/>
            <person name="Zhu X."/>
            <person name="Smith H.O."/>
            <person name="Gibbs R.A."/>
            <person name="Myers E.W."/>
            <person name="Rubin G.M."/>
            <person name="Venter J.C."/>
        </authorList>
    </citation>
    <scope>NUCLEOTIDE SEQUENCE [LARGE SCALE GENOMIC DNA]</scope>
    <source>
        <strain evidence="3">Berkeley</strain>
    </source>
</reference>
<reference evidence="29" key="2">
    <citation type="journal article" date="2002" name="Genome Biol.">
        <title>Annotation of the Drosophila melanogaster euchromatic genome: a systematic review.</title>
        <authorList>
            <person name="Misra S."/>
            <person name="Crosby M.A."/>
            <person name="Mungall C.J."/>
            <person name="Matthews B.B."/>
            <person name="Campbell K.S."/>
            <person name="Hradecky P."/>
            <person name="Huang Y."/>
            <person name="Kaminker J.S."/>
            <person name="Millburn G.H."/>
            <person name="Prochnik S.E."/>
            <person name="Smith C.D."/>
            <person name="Tupy J.L."/>
            <person name="Whitfield E.J."/>
            <person name="Bayraktaroglu L."/>
            <person name="Berman B.P."/>
            <person name="Bettencourt B.R."/>
            <person name="Celniker S.E."/>
            <person name="de Grey A.D.N.J."/>
            <person name="Drysdale R.A."/>
            <person name="Harris N.L."/>
            <person name="Richter J."/>
            <person name="Russo S."/>
            <person name="Schroeder A.J."/>
            <person name="Shu S.Q."/>
            <person name="Stapleton M."/>
            <person name="Yamada C."/>
            <person name="Ashburner M."/>
            <person name="Gelbart W.M."/>
            <person name="Rubin G.M."/>
            <person name="Lewis S.E."/>
        </authorList>
    </citation>
    <scope>GENOME REANNOTATION</scope>
    <source>
        <strain>Berkeley</strain>
    </source>
</reference>
<reference evidence="30" key="3">
    <citation type="journal article" date="2002" name="Genome Biol.">
        <title>A Drosophila full-length cDNA resource.</title>
        <authorList>
            <person name="Stapleton M."/>
            <person name="Carlson J.W."/>
            <person name="Brokstein P."/>
            <person name="Yu C."/>
            <person name="Champe M."/>
            <person name="George R.A."/>
            <person name="Guarin H."/>
            <person name="Kronmiller B."/>
            <person name="Pacleb J.M."/>
            <person name="Park S."/>
            <person name="Wan K.H."/>
            <person name="Rubin G.M."/>
            <person name="Celniker S.E."/>
        </authorList>
    </citation>
    <scope>NUCLEOTIDE SEQUENCE [LARGE SCALE MRNA] (ISOFORM B)</scope>
    <source>
        <strain evidence="30">Berkeley</strain>
        <tissue evidence="4">Head</tissue>
        <tissue evidence="4">Larva</tissue>
        <tissue evidence="4">Pupae</tissue>
    </source>
</reference>
<reference key="4">
    <citation type="journal article" date="2007" name="Nat. Neurosci.">
        <title>Function of the Drosophila CPEB protein Orb2 in long-term courtship memory.</title>
        <authorList>
            <person name="Keleman K."/>
            <person name="Kruettner S."/>
            <person name="Alenius M."/>
            <person name="Dickson B.J."/>
        </authorList>
    </citation>
    <scope>FUNCTION</scope>
    <scope>TISSUE SPECIFICITY</scope>
    <scope>DOMAIN (ISOFORM A)</scope>
</reference>
<reference key="5">
    <citation type="journal article" date="2008" name="J. Proteome Res.">
        <title>Phosphoproteome analysis of Drosophila melanogaster embryos.</title>
        <authorList>
            <person name="Zhai B."/>
            <person name="Villen J."/>
            <person name="Beausoleil S.A."/>
            <person name="Mintseris J."/>
            <person name="Gygi S.P."/>
        </authorList>
    </citation>
    <scope>PHOSPHORYLATION [LARGE SCALE ANALYSIS] AT SER-74; SER-88; SER-100; SER-425 AND SER-428</scope>
    <scope>IDENTIFICATION BY MASS SPECTROMETRY</scope>
    <source>
        <tissue>Embryo</tissue>
    </source>
</reference>
<reference key="6">
    <citation type="journal article" date="2010" name="Proc. Natl. Acad. Sci. U.S.A.">
        <title>Drosophila Orb2 targets genes involved in neuronal growth, synapse formation, and protein turnover.</title>
        <authorList>
            <person name="Mastushita-Sakai T."/>
            <person name="White-Grindley E."/>
            <person name="Samuelson J."/>
            <person name="Seidel C."/>
            <person name="Si K."/>
        </authorList>
    </citation>
    <scope>FUNCTION</scope>
</reference>
<reference key="7">
    <citation type="journal article" date="2011" name="Genetics">
        <title>The Drosophila CPEB protein Orb2 has a novel expression pattern and is important for asymmetric cell division and nervous system function.</title>
        <authorList>
            <person name="Hafer N."/>
            <person name="Xu S."/>
            <person name="Bhat K.M."/>
            <person name="Schedl P."/>
        </authorList>
    </citation>
    <scope>FUNCTION</scope>
    <scope>SUBCELLULAR LOCATION</scope>
    <scope>TISSUE SPECIFICITY</scope>
    <scope>DEVELOPMENTAL STAGE</scope>
</reference>
<reference key="8">
    <citation type="journal article" date="2012" name="Cell">
        <title>Critical role of amyloid-like oligomers of Drosophila Orb2 in the persistence of memory.</title>
        <authorList>
            <person name="Majumdar A."/>
            <person name="Cesario W.C."/>
            <person name="White-Grindley E."/>
            <person name="Jiang H."/>
            <person name="Ren F."/>
            <person name="Khan M.R."/>
            <person name="Li L."/>
            <person name="Choi E.M."/>
            <person name="Kannan K."/>
            <person name="Guo F."/>
            <person name="Unruh J."/>
            <person name="Slaughter B."/>
            <person name="Si K."/>
        </authorList>
    </citation>
    <scope>SUBUNIT</scope>
    <scope>SUBCELLULAR LOCATION</scope>
</reference>
<reference key="9">
    <citation type="journal article" date="2012" name="Neuron">
        <title>Drosophila CPEB Orb2A mediates memory independent of its RNA-binding domain.</title>
        <authorList>
            <person name="Kruettner S."/>
            <person name="Stepien B."/>
            <person name="Noordermeer J.N."/>
            <person name="Mommaas M.A."/>
            <person name="Mechtler K."/>
            <person name="Dickson B.J."/>
            <person name="Keleman K."/>
        </authorList>
    </citation>
    <scope>FUNCTION</scope>
    <scope>SUBUNIT</scope>
    <scope>SUBCELLULAR LOCATION</scope>
    <scope>TISSUE SPECIFICITY</scope>
    <scope>DOMAIN (ISOFORMS A AND B)</scope>
</reference>
<reference key="10">
    <citation type="journal article" date="2012" name="PLoS Genet.">
        <title>The CPEB protein Orb2 has multiple functions during spermatogenesis in Drosophila melanogaster.</title>
        <authorList>
            <person name="Xu S."/>
            <person name="Hafer N."/>
            <person name="Agunwamba B."/>
            <person name="Schedl P."/>
        </authorList>
    </citation>
    <scope>FUNCTION</scope>
    <scope>INTERACTION WITH BOL</scope>
    <scope>SUBCELLULAR LOCATION</scope>
    <scope>DEVELOPMENTAL STAGE</scope>
    <scope>DISRUPTION PHENOTYPE</scope>
</reference>
<reference key="11">
    <citation type="journal article" date="2014" name="PLoS Biol.">
        <title>Contribution of Orb2A stability in regulated amyloid-like oligomerization of Drosophila Orb2.</title>
        <authorList>
            <person name="White-Grindley E."/>
            <person name="Li L."/>
            <person name="Mohammad Khan R."/>
            <person name="Ren F."/>
            <person name="Saraf A."/>
            <person name="Florens L."/>
            <person name="Si K."/>
        </authorList>
    </citation>
    <scope>INTERACTION WITH TOB</scope>
    <scope>SUBCELLULAR LOCATION</scope>
    <scope>PHOSPHORYLATION</scope>
</reference>
<reference key="12">
    <citation type="journal article" date="2014" name="PLoS Genet.">
        <title>Spermatid cyst polarization in Drosophila depends upon apkc and the CPEB family translational regulator orb2.</title>
        <authorList>
            <person name="Xu S."/>
            <person name="Tyagi S."/>
            <person name="Schedl P."/>
        </authorList>
    </citation>
    <scope>FUNCTION</scope>
    <scope>DISRUPTION PHENOTYPE</scope>
</reference>
<reference key="13">
    <citation type="journal article" date="2015" name="Cell">
        <title>Amyloidogenic oligomerization transforms Drosophila Orb2 from a translation repressor to an activator.</title>
        <authorList>
            <person name="Khan M.R."/>
            <person name="Li L."/>
            <person name="Perez-Sanchez C."/>
            <person name="Saraf A."/>
            <person name="Florens L."/>
            <person name="Slaughter B.D."/>
            <person name="Unruh J.R."/>
            <person name="Si K."/>
        </authorList>
    </citation>
    <scope>FUNCTION</scope>
</reference>
<reference key="14">
    <citation type="journal article" date="2015" name="Cell Rep.">
        <title>Synaptic Orb2A bridges memory acquisition and late memory consolidation in Drosophila.</title>
        <authorList>
            <person name="Kruettner S."/>
            <person name="Traunmueller L."/>
            <person name="Dag U."/>
            <person name="Jandrasits K."/>
            <person name="Stepien B."/>
            <person name="Iyer N."/>
            <person name="Fradkin L.G."/>
            <person name="Noordermeer J.N."/>
            <person name="Mensh B.D."/>
            <person name="Keleman K."/>
        </authorList>
    </citation>
    <scope>FUNCTION</scope>
    <scope>SUBCELLULAR LOCATION (ISOFORMS A AND B)</scope>
</reference>
<reference key="15">
    <citation type="journal article" date="2016" name="PLoS Biol.">
        <title>Molecular basis of Orb2 amyloidogenesis and blockade of memory consolidation.</title>
        <authorList>
            <person name="Hervas R."/>
            <person name="Li L."/>
            <person name="Majumdar A."/>
            <person name="Fernandez-Ramirez M.C."/>
            <person name="Unruh J.R."/>
            <person name="Slaughter B.D."/>
            <person name="Galera-Prat A."/>
            <person name="Santana E."/>
            <person name="Suzuki M."/>
            <person name="Nagai Y."/>
            <person name="Bruix M."/>
            <person name="Casas-Tinto S."/>
            <person name="Menendez M."/>
            <person name="Laurents D.V."/>
            <person name="Si K."/>
            <person name="Carrion-Vazquez M."/>
        </authorList>
    </citation>
    <scope>SUBUNIT</scope>
</reference>
<reference key="16">
    <citation type="journal article" date="2017" name="Biomolecules">
        <title>Metal Binding Properties of the N-Terminus of the Functional Amyloid Orb2.</title>
        <authorList>
            <person name="Bajakian T.H."/>
            <person name="Cervantes S.A."/>
            <person name="Soria M.A."/>
            <person name="Beaugrand M."/>
            <person name="Kim J.Y."/>
            <person name="Service R.J."/>
            <person name="Siemer A.B."/>
        </authorList>
    </citation>
    <scope>DOMAIN (ISOFORM A)</scope>
</reference>
<reference key="17">
    <citation type="journal article" date="2017" name="Biophys. J.">
        <title>The Functional Amyloid Orb2A Binds to Lipid Membranes.</title>
        <authorList>
            <person name="Soria M.A."/>
            <person name="Cervantes S.A."/>
            <person name="Bajakian T.H."/>
            <person name="Siemer A.B."/>
        </authorList>
    </citation>
    <scope>DOMAIN (ISOFORM A)</scope>
</reference>
<reference key="18">
    <citation type="journal article" date="2017" name="Cell">
        <title>Regulated Intron Removal Integrates Motivational State and Experience.</title>
        <authorList>
            <person name="Gill J."/>
            <person name="Park Y."/>
            <person name="McGinnis J.P."/>
            <person name="Perez-Sanchez C."/>
            <person name="Blanchette M."/>
            <person name="Si K."/>
        </authorList>
    </citation>
    <scope>FUNCTION</scope>
    <scope>FUNCTION (ISOFORM A)</scope>
    <scope>DISRUPTION PHENOTYPE (ISOFORM A)</scope>
</reference>
<reference key="19">
    <citation type="journal article" date="2017" name="J. Neurogenet.">
        <title>Orb2 as modulator of Brat and their role at the neuromuscular junction.</title>
        <authorList>
            <person name="Santana E."/>
            <person name="Casas-Tinto S."/>
        </authorList>
    </citation>
    <scope>FUNCTION</scope>
    <scope>SUBCELLULAR LOCATION</scope>
    <scope>DEVELOPMENTAL STAGE</scope>
    <scope>DISRUPTION PHENOTYPE</scope>
    <scope>DISRUPTION PHENOTYPE (ISOFORM A)</scope>
</reference>
<reference key="20">
    <citation type="journal article" date="2018" name="RNA">
        <title>Dicer-2 promotes mRNA activation through cytoplasmic polyadenylation.</title>
        <authorList>
            <person name="Coll O."/>
            <person name="Guitart T."/>
            <person name="Villalba A."/>
            <person name="Papin C."/>
            <person name="Simonelig M."/>
            <person name="Gebauer F."/>
        </authorList>
    </citation>
    <scope>DEVELOPMENTAL STAGE</scope>
</reference>
<reference evidence="32" key="21">
    <citation type="journal article" date="2020" name="Science">
        <title>Cryo-EM structure of a neuronal functional amyloid implicated in memory persistence in Drosophila.</title>
        <authorList>
            <person name="Hervas R."/>
            <person name="Rau M.J."/>
            <person name="Park Y."/>
            <person name="Zhang W."/>
            <person name="Murzin A.G."/>
            <person name="Fitzpatrick J.A.J."/>
            <person name="Scheres S.H.W."/>
            <person name="Si K."/>
        </authorList>
    </citation>
    <scope>STRUCTURE BY ELECTRON MICROSCOPY (2.60 ANGSTROMS) OF 176-206</scope>
    <scope>FUNCTION</scope>
    <scope>SUBUNIT</scope>
    <scope>TISSUE SPECIFICITY</scope>
    <scope>DEVELOPMENTAL STAGE</scope>
</reference>
<feature type="chain" id="PRO_0000232396" description="Translational regulator orb2">
    <location>
        <begin position="1"/>
        <end position="704"/>
    </location>
</feature>
<feature type="domain" description="RRM 1" evidence="1">
    <location>
        <begin position="447"/>
        <end position="538"/>
    </location>
</feature>
<feature type="domain" description="RRM 2" evidence="1">
    <location>
        <begin position="555"/>
        <end position="637"/>
    </location>
</feature>
<feature type="region of interest" description="Disordered" evidence="2">
    <location>
        <begin position="1"/>
        <end position="64"/>
    </location>
</feature>
<feature type="region of interest" description="Disordered" evidence="2">
    <location>
        <begin position="82"/>
        <end position="106"/>
    </location>
</feature>
<feature type="region of interest" description="Gln/His-rich" evidence="27">
    <location>
        <begin position="163"/>
        <end position="240"/>
    </location>
</feature>
<feature type="region of interest" description="Disordered" evidence="2">
    <location>
        <begin position="166"/>
        <end position="266"/>
    </location>
</feature>
<feature type="region of interest" description="Disordered" evidence="2">
    <location>
        <begin position="417"/>
        <end position="438"/>
    </location>
</feature>
<feature type="compositionally biased region" description="Low complexity" evidence="2">
    <location>
        <begin position="9"/>
        <end position="42"/>
    </location>
</feature>
<feature type="compositionally biased region" description="Low complexity" evidence="2">
    <location>
        <begin position="176"/>
        <end position="205"/>
    </location>
</feature>
<feature type="compositionally biased region" description="Low complexity" evidence="2">
    <location>
        <begin position="218"/>
        <end position="233"/>
    </location>
</feature>
<feature type="compositionally biased region" description="Low complexity" evidence="2">
    <location>
        <begin position="417"/>
        <end position="429"/>
    </location>
</feature>
<feature type="modified residue" description="Phosphoserine" evidence="6">
    <location>
        <position position="74"/>
    </location>
</feature>
<feature type="modified residue" description="Phosphoserine" evidence="6">
    <location>
        <position position="88"/>
    </location>
</feature>
<feature type="modified residue" description="Phosphoserine" evidence="6">
    <location>
        <position position="100"/>
    </location>
</feature>
<feature type="modified residue" description="Phosphoserine" evidence="6">
    <location>
        <position position="425"/>
    </location>
</feature>
<feature type="modified residue" description="Phosphoserine" evidence="6">
    <location>
        <position position="428"/>
    </location>
</feature>
<feature type="splice variant" id="VSP_051999" description="In isoform A." evidence="23">
    <original>DSLKLPKA</original>
    <variation>YNKFVNFI</variation>
    <location>
        <begin position="2"/>
        <end position="9"/>
    </location>
</feature>
<feature type="splice variant" id="VSP_052000" description="In isoform A." evidence="23">
    <location>
        <begin position="10"/>
        <end position="162"/>
    </location>
</feature>
<feature type="strand" evidence="33">
    <location>
        <begin position="177"/>
        <end position="191"/>
    </location>
</feature>
<feature type="strand" evidence="33">
    <location>
        <begin position="197"/>
        <end position="204"/>
    </location>
</feature>
<feature type="region of interest" description="Gln/His-rich" evidence="18 19">
    <location sequence="Q9VSR3-2">
        <begin position="1"/>
        <end position="87"/>
    </location>
</feature>
<dbReference type="EMBL" id="AE014296">
    <property type="protein sequence ID" value="AAF50350.1"/>
    <property type="molecule type" value="Genomic_DNA"/>
</dbReference>
<dbReference type="EMBL" id="AE014296">
    <property type="protein sequence ID" value="AAF50352.1"/>
    <property type="molecule type" value="Genomic_DNA"/>
</dbReference>
<dbReference type="EMBL" id="AY052043">
    <property type="protein sequence ID" value="AAK93467.1"/>
    <property type="molecule type" value="mRNA"/>
</dbReference>
<dbReference type="EMBL" id="AY060352">
    <property type="protein sequence ID" value="AAL25391.1"/>
    <property type="status" value="ALT_SEQ"/>
    <property type="molecule type" value="mRNA"/>
</dbReference>
<dbReference type="RefSeq" id="NP_001261608.1">
    <molecule id="Q9VSR3-1"/>
    <property type="nucleotide sequence ID" value="NM_001274679.1"/>
</dbReference>
<dbReference type="RefSeq" id="NP_648266.1">
    <molecule id="Q9VSR3-1"/>
    <property type="nucleotide sequence ID" value="NM_140009.3"/>
</dbReference>
<dbReference type="RefSeq" id="NP_729427.1">
    <molecule id="Q9VSR3-1"/>
    <property type="nucleotide sequence ID" value="NM_168300.3"/>
</dbReference>
<dbReference type="RefSeq" id="NP_729428.1">
    <molecule id="Q9VSR3-1"/>
    <property type="nucleotide sequence ID" value="NM_168301.3"/>
</dbReference>
<dbReference type="RefSeq" id="NP_729429.1">
    <molecule id="Q9VSR3-2"/>
    <property type="nucleotide sequence ID" value="NM_168302.3"/>
</dbReference>
<dbReference type="PDB" id="6VPS">
    <property type="method" value="EM"/>
    <property type="resolution" value="2.60 A"/>
    <property type="chains" value="A/B/C/D/E/F/G/H/I=176-206"/>
</dbReference>
<dbReference type="PDBsum" id="6VPS"/>
<dbReference type="EMDB" id="EMD-21316"/>
<dbReference type="SMR" id="Q9VSR3"/>
<dbReference type="BioGRID" id="64423">
    <property type="interactions" value="80"/>
</dbReference>
<dbReference type="DIP" id="DIP-49224N"/>
<dbReference type="FunCoup" id="Q9VSR3">
    <property type="interactions" value="12"/>
</dbReference>
<dbReference type="IntAct" id="Q9VSR3">
    <property type="interactions" value="13"/>
</dbReference>
<dbReference type="STRING" id="7227.FBpp0423157"/>
<dbReference type="iPTMnet" id="Q9VSR3"/>
<dbReference type="PaxDb" id="7227-FBpp0303905"/>
<dbReference type="DNASU" id="39018"/>
<dbReference type="EnsemblMetazoa" id="FBtr0331511">
    <molecule id="Q9VSR3-2"/>
    <property type="protein sequence ID" value="FBpp0303901"/>
    <property type="gene ID" value="FBgn0264307"/>
</dbReference>
<dbReference type="EnsemblMetazoa" id="FBtr0331512">
    <molecule id="Q9VSR3-1"/>
    <property type="protein sequence ID" value="FBpp0303902"/>
    <property type="gene ID" value="FBgn0264307"/>
</dbReference>
<dbReference type="EnsemblMetazoa" id="FBtr0331513">
    <molecule id="Q9VSR3-1"/>
    <property type="protein sequence ID" value="FBpp0303903"/>
    <property type="gene ID" value="FBgn0264307"/>
</dbReference>
<dbReference type="EnsemblMetazoa" id="FBtr0331514">
    <molecule id="Q9VSR3-1"/>
    <property type="protein sequence ID" value="FBpp0303904"/>
    <property type="gene ID" value="FBgn0264307"/>
</dbReference>
<dbReference type="EnsemblMetazoa" id="FBtr0331515">
    <molecule id="Q9VSR3-1"/>
    <property type="protein sequence ID" value="FBpp0303905"/>
    <property type="gene ID" value="FBgn0264307"/>
</dbReference>
<dbReference type="GeneID" id="39018"/>
<dbReference type="KEGG" id="dme:Dmel_CG43782"/>
<dbReference type="UCSC" id="CG5735-RA">
    <molecule id="Q9VSR3-1"/>
    <property type="organism name" value="d. melanogaster"/>
</dbReference>
<dbReference type="AGR" id="FB:FBgn0264307"/>
<dbReference type="CTD" id="39018"/>
<dbReference type="FlyBase" id="FBgn0264307">
    <property type="gene designation" value="orb2"/>
</dbReference>
<dbReference type="VEuPathDB" id="VectorBase:FBgn0264307"/>
<dbReference type="eggNOG" id="KOG0129">
    <property type="taxonomic scope" value="Eukaryota"/>
</dbReference>
<dbReference type="GeneTree" id="ENSGT00940000169843"/>
<dbReference type="InParanoid" id="Q9VSR3"/>
<dbReference type="OMA" id="SDYMRGM"/>
<dbReference type="OrthoDB" id="7868924at2759"/>
<dbReference type="PhylomeDB" id="Q9VSR3"/>
<dbReference type="SignaLink" id="Q9VSR3"/>
<dbReference type="BioGRID-ORCS" id="39018">
    <property type="hits" value="0 hits in 3 CRISPR screens"/>
</dbReference>
<dbReference type="CD-CODE" id="19A54EA0">
    <property type="entry name" value="Sponge body"/>
</dbReference>
<dbReference type="GenomeRNAi" id="39018"/>
<dbReference type="PRO" id="PR:Q9VSR3"/>
<dbReference type="Proteomes" id="UP000000803">
    <property type="component" value="Chromosome 3L"/>
</dbReference>
<dbReference type="Bgee" id="FBgn0264307">
    <property type="expression patterns" value="Expressed in spermatocyte in testis and 292 other cell types or tissues"/>
</dbReference>
<dbReference type="ExpressionAtlas" id="Q9VSR3">
    <property type="expression patterns" value="baseline and differential"/>
</dbReference>
<dbReference type="GO" id="GO:0030424">
    <property type="term" value="C:axon"/>
    <property type="evidence" value="ECO:0000314"/>
    <property type="project" value="UniProtKB"/>
</dbReference>
<dbReference type="GO" id="GO:0043679">
    <property type="term" value="C:axon terminus"/>
    <property type="evidence" value="ECO:0000314"/>
    <property type="project" value="FlyBase"/>
</dbReference>
<dbReference type="GO" id="GO:0044297">
    <property type="term" value="C:cell body"/>
    <property type="evidence" value="ECO:0000314"/>
    <property type="project" value="UniProtKB"/>
</dbReference>
<dbReference type="GO" id="GO:0005938">
    <property type="term" value="C:cell cortex"/>
    <property type="evidence" value="ECO:0000314"/>
    <property type="project" value="FlyBase"/>
</dbReference>
<dbReference type="GO" id="GO:0005737">
    <property type="term" value="C:cytoplasm"/>
    <property type="evidence" value="ECO:0000314"/>
    <property type="project" value="FlyBase"/>
</dbReference>
<dbReference type="GO" id="GO:0005829">
    <property type="term" value="C:cytosol"/>
    <property type="evidence" value="ECO:0007005"/>
    <property type="project" value="FlyBase"/>
</dbReference>
<dbReference type="GO" id="GO:0044292">
    <property type="term" value="C:dendrite terminus"/>
    <property type="evidence" value="ECO:0000314"/>
    <property type="project" value="FlyBase"/>
</dbReference>
<dbReference type="GO" id="GO:0043005">
    <property type="term" value="C:neuron projection"/>
    <property type="evidence" value="ECO:0000318"/>
    <property type="project" value="GO_Central"/>
</dbReference>
<dbReference type="GO" id="GO:0005634">
    <property type="term" value="C:nucleus"/>
    <property type="evidence" value="ECO:0000318"/>
    <property type="project" value="GO_Central"/>
</dbReference>
<dbReference type="GO" id="GO:0043204">
    <property type="term" value="C:perikaryon"/>
    <property type="evidence" value="ECO:0007669"/>
    <property type="project" value="UniProtKB-SubCell"/>
</dbReference>
<dbReference type="GO" id="GO:0048471">
    <property type="term" value="C:perinuclear region of cytoplasm"/>
    <property type="evidence" value="ECO:0000314"/>
    <property type="project" value="FlyBase"/>
</dbReference>
<dbReference type="GO" id="GO:0098794">
    <property type="term" value="C:postsynapse"/>
    <property type="evidence" value="ECO:0000314"/>
    <property type="project" value="SynGO"/>
</dbReference>
<dbReference type="GO" id="GO:0098793">
    <property type="term" value="C:presynapse"/>
    <property type="evidence" value="ECO:0000314"/>
    <property type="project" value="SynGO"/>
</dbReference>
<dbReference type="GO" id="GO:0032991">
    <property type="term" value="C:protein-containing complex"/>
    <property type="evidence" value="ECO:0000314"/>
    <property type="project" value="UniProtKB"/>
</dbReference>
<dbReference type="GO" id="GO:0045202">
    <property type="term" value="C:synapse"/>
    <property type="evidence" value="ECO:0000314"/>
    <property type="project" value="UniProtKB"/>
</dbReference>
<dbReference type="GO" id="GO:0097060">
    <property type="term" value="C:synaptic membrane"/>
    <property type="evidence" value="ECO:0000314"/>
    <property type="project" value="UniProtKB"/>
</dbReference>
<dbReference type="GO" id="GO:0042802">
    <property type="term" value="F:identical protein binding"/>
    <property type="evidence" value="ECO:0000353"/>
    <property type="project" value="IntAct"/>
</dbReference>
<dbReference type="GO" id="GO:0003730">
    <property type="term" value="F:mRNA 3'-UTR binding"/>
    <property type="evidence" value="ECO:0000314"/>
    <property type="project" value="UniProtKB"/>
</dbReference>
<dbReference type="GO" id="GO:0000900">
    <property type="term" value="F:mRNA regulatory element binding translation repressor activity"/>
    <property type="evidence" value="ECO:0000314"/>
    <property type="project" value="FlyBase"/>
</dbReference>
<dbReference type="GO" id="GO:0043022">
    <property type="term" value="F:ribosome binding"/>
    <property type="evidence" value="ECO:0000318"/>
    <property type="project" value="GO_Central"/>
</dbReference>
<dbReference type="GO" id="GO:0003723">
    <property type="term" value="F:RNA binding"/>
    <property type="evidence" value="ECO:0000255"/>
    <property type="project" value="FlyBase"/>
</dbReference>
<dbReference type="GO" id="GO:0008494">
    <property type="term" value="F:translation activator activity"/>
    <property type="evidence" value="ECO:0000315"/>
    <property type="project" value="UniProtKB"/>
</dbReference>
<dbReference type="GO" id="GO:0008135">
    <property type="term" value="F:translation factor activity, RNA binding"/>
    <property type="evidence" value="ECO:0000318"/>
    <property type="project" value="GO_Central"/>
</dbReference>
<dbReference type="GO" id="GO:0008356">
    <property type="term" value="P:asymmetric cell division"/>
    <property type="evidence" value="ECO:0000315"/>
    <property type="project" value="FlyBase"/>
</dbReference>
<dbReference type="GO" id="GO:0007616">
    <property type="term" value="P:long-term memory"/>
    <property type="evidence" value="ECO:0000315"/>
    <property type="project" value="UniProtKB"/>
</dbReference>
<dbReference type="GO" id="GO:0008049">
    <property type="term" value="P:male courtship behavior"/>
    <property type="evidence" value="ECO:0000315"/>
    <property type="project" value="FlyBase"/>
</dbReference>
<dbReference type="GO" id="GO:0007141">
    <property type="term" value="P:male meiosis I"/>
    <property type="evidence" value="ECO:0000315"/>
    <property type="project" value="FlyBase"/>
</dbReference>
<dbReference type="GO" id="GO:2000766">
    <property type="term" value="P:negative regulation of cytoplasmic translation"/>
    <property type="evidence" value="ECO:0000318"/>
    <property type="project" value="GO_Central"/>
</dbReference>
<dbReference type="GO" id="GO:0017148">
    <property type="term" value="P:negative regulation of translation"/>
    <property type="evidence" value="ECO:0000314"/>
    <property type="project" value="FlyBase"/>
</dbReference>
<dbReference type="GO" id="GO:0045727">
    <property type="term" value="P:positive regulation of translation"/>
    <property type="evidence" value="ECO:0000314"/>
    <property type="project" value="FlyBase"/>
</dbReference>
<dbReference type="GO" id="GO:0050821">
    <property type="term" value="P:protein stabilization"/>
    <property type="evidence" value="ECO:0000314"/>
    <property type="project" value="UniProtKB"/>
</dbReference>
<dbReference type="GO" id="GO:0007288">
    <property type="term" value="P:sperm axoneme assembly"/>
    <property type="evidence" value="ECO:0000315"/>
    <property type="project" value="FlyBase"/>
</dbReference>
<dbReference type="GO" id="GO:0007291">
    <property type="term" value="P:sperm individualization"/>
    <property type="evidence" value="ECO:0000315"/>
    <property type="project" value="FlyBase"/>
</dbReference>
<dbReference type="GO" id="GO:0007283">
    <property type="term" value="P:spermatogenesis"/>
    <property type="evidence" value="ECO:0000315"/>
    <property type="project" value="FlyBase"/>
</dbReference>
<dbReference type="CDD" id="cd19757">
    <property type="entry name" value="Bbox1"/>
    <property type="match status" value="1"/>
</dbReference>
<dbReference type="CDD" id="cd12724">
    <property type="entry name" value="RRM1_CPEB2_like"/>
    <property type="match status" value="1"/>
</dbReference>
<dbReference type="CDD" id="cd12726">
    <property type="entry name" value="RRM2_CPEB2_like"/>
    <property type="match status" value="1"/>
</dbReference>
<dbReference type="FunFam" id="3.30.70.330:FF:000008">
    <property type="entry name" value="Cytoplasmic polyadenylation element-binding 2 isoform X2"/>
    <property type="match status" value="1"/>
</dbReference>
<dbReference type="FunFam" id="4.10.640.40:FF:000001">
    <property type="entry name" value="Cytoplasmic polyadenylation element-binding 2 isoform X2"/>
    <property type="match status" value="1"/>
</dbReference>
<dbReference type="FunFam" id="3.30.70.330:FF:000009">
    <property type="entry name" value="cytoplasmic polyadenylation element-binding protein 2 isoform X1"/>
    <property type="match status" value="1"/>
</dbReference>
<dbReference type="Gene3D" id="3.30.70.330">
    <property type="match status" value="2"/>
</dbReference>
<dbReference type="Gene3D" id="4.10.640.40">
    <property type="entry name" value="Cytoplasmic polyadenylation element-binding protein, ZZ domain"/>
    <property type="match status" value="1"/>
</dbReference>
<dbReference type="InterPro" id="IPR032296">
    <property type="entry name" value="CEBP_ZZ"/>
</dbReference>
<dbReference type="InterPro" id="IPR038446">
    <property type="entry name" value="CEBP_ZZ_sf"/>
</dbReference>
<dbReference type="InterPro" id="IPR034819">
    <property type="entry name" value="CPEB"/>
</dbReference>
<dbReference type="InterPro" id="IPR012677">
    <property type="entry name" value="Nucleotide-bd_a/b_plait_sf"/>
</dbReference>
<dbReference type="InterPro" id="IPR035979">
    <property type="entry name" value="RBD_domain_sf"/>
</dbReference>
<dbReference type="InterPro" id="IPR000504">
    <property type="entry name" value="RRM_dom"/>
</dbReference>
<dbReference type="PANTHER" id="PTHR12566">
    <property type="entry name" value="CYTOPLASMIC POLYADENYLATION ELEMENT BINDING PROTEIN CPEB"/>
    <property type="match status" value="1"/>
</dbReference>
<dbReference type="PANTHER" id="PTHR12566:SF12">
    <property type="entry name" value="TRANSLATIONAL REGULATOR ORB2"/>
    <property type="match status" value="1"/>
</dbReference>
<dbReference type="Pfam" id="PF16366">
    <property type="entry name" value="CEBP_ZZ"/>
    <property type="match status" value="1"/>
</dbReference>
<dbReference type="Pfam" id="PF16367">
    <property type="entry name" value="RRM_7"/>
    <property type="match status" value="1"/>
</dbReference>
<dbReference type="SMART" id="SM00360">
    <property type="entry name" value="RRM"/>
    <property type="match status" value="2"/>
</dbReference>
<dbReference type="SUPFAM" id="SSF54928">
    <property type="entry name" value="RNA-binding domain, RBD"/>
    <property type="match status" value="1"/>
</dbReference>
<dbReference type="PROSITE" id="PS50102">
    <property type="entry name" value="RRM"/>
    <property type="match status" value="2"/>
</dbReference>
<gene>
    <name evidence="29" type="primary">orb2</name>
    <name type="ORF">CG43782</name>
</gene>
<accession>Q9VSR3</accession>
<accession>Q95T31</accession>
<accession>Q9VSR2</accession>
<keyword id="KW-0002">3D-structure</keyword>
<keyword id="KW-0010">Activator</keyword>
<keyword id="KW-0025">Alternative splicing</keyword>
<keyword id="KW-0034">Amyloid</keyword>
<keyword id="KW-0131">Cell cycle</keyword>
<keyword id="KW-0132">Cell division</keyword>
<keyword id="KW-0966">Cell projection</keyword>
<keyword id="KW-0963">Cytoplasm</keyword>
<keyword id="KW-0221">Differentiation</keyword>
<keyword id="KW-0597">Phosphoprotein</keyword>
<keyword id="KW-1185">Reference proteome</keyword>
<keyword id="KW-0677">Repeat</keyword>
<keyword id="KW-0678">Repressor</keyword>
<keyword id="KW-0694">RNA-binding</keyword>
<keyword id="KW-0744">Spermatogenesis</keyword>
<keyword id="KW-0770">Synapse</keyword>
<keyword id="KW-0810">Translation regulation</keyword>
<name>ORB2_DROME</name>
<proteinExistence type="evidence at protein level"/>
<organism>
    <name type="scientific">Drosophila melanogaster</name>
    <name type="common">Fruit fly</name>
    <dbReference type="NCBI Taxonomy" id="7227"/>
    <lineage>
        <taxon>Eukaryota</taxon>
        <taxon>Metazoa</taxon>
        <taxon>Ecdysozoa</taxon>
        <taxon>Arthropoda</taxon>
        <taxon>Hexapoda</taxon>
        <taxon>Insecta</taxon>
        <taxon>Pterygota</taxon>
        <taxon>Neoptera</taxon>
        <taxon>Endopterygota</taxon>
        <taxon>Diptera</taxon>
        <taxon>Brachycera</taxon>
        <taxon>Muscomorpha</taxon>
        <taxon>Ephydroidea</taxon>
        <taxon>Drosophilidae</taxon>
        <taxon>Drosophila</taxon>
        <taxon>Sophophora</taxon>
    </lineage>
</organism>
<comment type="function">
    <text evidence="5 7 8 10 11 13 14 15 17 20 22">RNA-binding protein involved in translational regulation and required for long-term memory (PubMed:28525754, PubMed:29105522). Required in mushroom body gamma neurons for long-term memory in male courtship (PubMed:17965711, PubMed:23083740). Binds to mRNA 3'-UTRs (PubMed:20547833, PubMed:24830287, PubMed:26095367, PubMed:26638074, PubMed:32165583). In its monomeric form, acts as a translational repressor of genes involved in neuronal growth, synapse formation and protein turnover (PubMed:20547833, PubMed:26638074, PubMed:32165583). In its amyloid-like oligomeric form, acts as a translational activator (PubMed:26638074, PubMed:32165583). The monomeric form reduces poly(A) tail length and destabilizes mRNA while the oligomeric form protects and elongates the poly(A) tail and stabilizes mRNA (PubMed:26638074). Involved in asymmetric cell division in the central nervous system (PubMed:21900268). Plays a role in synapse formation and morphology at neuromuscular junctions by modulating the translation of the tumor suppressor brat (PubMed:29105522). Required for the progression of spermatogenesis through meiosis and for sperm differentiation (PubMed:23209437). During sperm differentiation, required to asymmetrically localize and activate the translation of protein kinase aPKC mRNAs which is necessary for spermatid cyst polarization (PubMed:24830287). Also required during spermatid cyst polarization for localization and translation of its own mRNA (PubMed:24830287).</text>
</comment>
<comment type="function">
    <molecule>Isoform A</molecule>
    <text evidence="14 17">Required for initial memory acquisition (PubMed:26095367, PubMed:28525754). Following subsequent late dopaminergic pathway activation, recruits isoform B into a complex to activate translation of CaMKII which is required for long-term memory consolidation (PubMed:26095367).</text>
</comment>
<comment type="subunit">
    <text evidence="9 10 11 12 16 22">Monomer (PubMed:22284910, PubMed:23083740, PubMed:32165583). Upon neuronal stimulation, forms stable amyloid-like oligomers composed of isoform A and isoform B which are required for formation of persistent long-term memory (PubMed:22284910, PubMed:23083740, PubMed:32165583). Isoform A is critical for oligomer formation (PubMed:22284910, PubMed:23083740). Phe-5 of isoform A is required for amyloid-like oligomerization (PubMed:22284910, PubMed:26812143). Rapidly forms amyloids and toxic intermediates are extremely transient (PubMed:26812143). Unlike in the adult nervous system, remains monomeric in the early embryo (PubMed:32165583). Interacts with the translational regulator bol (PubMed:23209437). Interacts with Tob; the interaction is enhanced by neuronal stimulation, stabilizes isoform A and induces oligomerization (PubMed:24523662).</text>
</comment>
<comment type="interaction">
    <interactant intactId="EBI-16193700">
        <id>Q9VSR3-1</id>
    </interactant>
    <interactant intactId="EBI-16193700">
        <id>Q9VSR3-1</id>
        <label>orb2</label>
    </interactant>
    <organismsDiffer>false</organismsDiffer>
    <experiments>2</experiments>
</comment>
<comment type="interaction">
    <interactant intactId="EBI-16193628">
        <id>Q9VSR3-2</id>
    </interactant>
    <interactant intactId="EBI-16193628">
        <id>Q9VSR3-2</id>
        <label>orb2</label>
    </interactant>
    <organismsDiffer>false</organismsDiffer>
    <experiments>3</experiments>
</comment>
<comment type="subcellular location">
    <subcellularLocation>
        <location evidence="8">Perikaryon</location>
    </subcellularLocation>
    <subcellularLocation>
        <location evidence="8">Cell projection</location>
        <location evidence="8">Axon</location>
    </subcellularLocation>
    <subcellularLocation>
        <location evidence="8">Cell projection</location>
        <location evidence="8">Dendrite</location>
    </subcellularLocation>
    <subcellularLocation>
        <location evidence="9 10 12">Synapse</location>
    </subcellularLocation>
    <subcellularLocation>
        <location evidence="8 11">Cytoplasm</location>
    </subcellularLocation>
    <subcellularLocation>
        <location evidence="11">Cytoplasm</location>
        <location evidence="11">Perinuclear region</location>
    </subcellularLocation>
    <text evidence="8 9 20">In embryonic and larval nervous system, concentrated in the perikaryon (PubMed:21900268). In the adult central nervous system, localizes to synaptic terminals (PubMed:21900268). In the ovary, localizes to the cytoplasm of nurse cells (PubMed:21900268). Localizes to neuromuscular junctions (PubMed:29105522). In spermatocytes, localizes throughout the cytoplasm with higher levels concentrated in a ring around the nucleus (PubMed:23209437). The oligomeric form is enriched in the synaptic region (PubMed:22284910).</text>
</comment>
<comment type="subcellular location">
    <molecule>Isoform A</molecule>
    <subcellularLocation>
        <location evidence="14">Synapse</location>
    </subcellularLocation>
</comment>
<comment type="subcellular location">
    <molecule>Isoform B</molecule>
    <subcellularLocation>
        <location evidence="14">Perikaryon</location>
    </subcellularLocation>
    <subcellularLocation>
        <location evidence="14">Cell projection</location>
        <location evidence="14">Axon</location>
    </subcellularLocation>
    <subcellularLocation>
        <location evidence="14">Synapse</location>
    </subcellularLocation>
</comment>
<comment type="alternative products">
    <event type="alternative splicing"/>
    <isoform>
        <id>Q9VSR3-1</id>
        <name evidence="31">B</name>
        <name evidence="31">C</name>
        <name evidence="24">Orb2B</name>
        <sequence type="displayed"/>
    </isoform>
    <isoform>
        <id>Q9VSR3-2</id>
        <name evidence="31">A</name>
        <name evidence="24">Orb2A</name>
        <sequence type="described" ref="VSP_051999 VSP_052000"/>
    </isoform>
</comment>
<comment type="tissue specificity">
    <text evidence="5 8 10 22">Broadly expressed throughout the nervous system of embryo, larva and adult including the ventral nerve cord and brain (at protein level) (PubMed:23083740, PubMed:32165583). In early embryos, deposited maternally and distributed uniformly throughout the embryo until the extended germband stage (PubMed:21900268). By mid-embryogenesis, highest levels are found in the central and peripheral nervous systems with lower expression also detected in the ectoderm and mesoderm (PubMed:21900268). In adults, high levels are present in the head and body of both sexes with higher expression in testis than ovary (PubMed:21900268). In the ovary, expressed in both germ and follicle cells (PubMed:21900268). In adult head, predominantly neuronal with broad expression throughout the brain and ventral ganglia including the mushroom body (PubMed:17965711, PubMed:21900268).</text>
</comment>
<comment type="developmental stage">
    <text evidence="8 11 20 21 22">Expressed in 0- to 2-hour-old embryos (at protein level) (PubMed:29317541, PubMed:32165583). Expressed in the larval motor neuron cells in the brain (at protein level) (PubMed:29105522). Expressed throughout development in both the soma and germline. Widely expressed in early embryos with levels dropping during mid-embryogenesis and increasing again in late embryogenesis. Expression is relatively low during larval stages with lowest levels in the first and second instars and an increase during the third instar. Levels increase substantially during the pupal stage and remain relatively high in the adult. In the ovary, little expression in the germarium or previtellogenic stage chambers with levels increasing midway through oogenesis and remaining high until stage 10 (PubMed:21900268). In the testis, there is substantial up-regulation after mitosis is finished and the interconnected spermatocytes begin to grow (PubMed:23209437). Expression peaks as the mature spermatocytes go through meiosis and high levels are found in 32- and 64-cell spermatid cysts with expression persisting after the spermatids in the 64-cell cysts start differentiation and disappearing once elongation and nuclear condensation are completed (PubMed:23209437).</text>
</comment>
<comment type="induction">
    <molecule>Isoform A</molecule>
    <text evidence="26">In the adult brain the mRNA is expressed as an unspliced non-protein coding mRNA; inclusion of isoform A-specific exon in the mature transcript is important for long-term memory; mRNA levels depends on behavioral stimulus and splicing depends on the activity of the splicing regulator ps.</text>
</comment>
<comment type="domain">
    <molecule>Isoform A</molecule>
    <text evidence="10">The RNA-binding region is not essential for long-term memory.</text>
</comment>
<comment type="domain">
    <molecule>Isoform B</molecule>
    <text evidence="10">The RNA-binding region is essential for long-term memory.</text>
</comment>
<comment type="domain">
    <molecule>Isoform A</molecule>
    <text evidence="5 10 18 19">The N-terminal Gln/His-rich domain is necessary and sufficient for long-term memory and is required for formation of amyloid-like oligomers with isoform B (PubMed:17965711, PubMed:23083740). Binds transition metals (PubMed:28763009). Might bind lipid membranes (PubMed:28700922).</text>
</comment>
<comment type="domain">
    <molecule>Isoform B</molecule>
    <text evidence="10">The N-terminal Gln/His-rich domain is both dispensable and insufficient for long-term memory and for formation of amyloid-like oligomers with isoform A.</text>
</comment>
<comment type="PTM">
    <text evidence="12">Phosphorylation regulates interaction with Tob and oligomerization. Protein phosphatase 2A keeps both Orb2 and Tob in an unphosphorylated form. Following synaptic activation, unphosphorylated Orb2 is bound and stabilized by unphosphorylated Tob. Tob recruits activated LimK which phosphorylates both Orb2 and Tob and enhances Orb2 oligomerization.</text>
</comment>
<comment type="disruption phenotype">
    <text evidence="11 13 20">Substantially reduced viability with surviving males being completely sterile due to a failure of spermatocytes to complete meiosis with arrest happening at the G2-M transition (PubMed:23209437). Defective spermatid cyst polarization (PubMed:24830287). RNAi-mediated knockdown in motor neurons decreases number of synapses and accumulation of the tumor suppressor brat at neuromuscular junctions (NMJ) (PubMed:29105522). Simultaneous knockdown of the tumor suppressor brat restablishes the number of synapses at NMJ (PubMed:29105522).</text>
</comment>
<comment type="disruption phenotype">
    <molecule>Isoform A</molecule>
    <text evidence="17 20">Fails to form stable long-term memory during male courtship suppression, in which a male fly, upon repeated exposure to an unreceptive female, suppresses its courting behavior for days (PubMed:28525754). In neurons, increases levels of the tumor suppressor brat (PubMed:29105522).</text>
</comment>
<comment type="miscellaneous">
    <text evidence="28">Lowering pH destabilizes the protein filaments.</text>
</comment>
<comment type="sequence caution" evidence="25">
    <conflict type="erroneous translation">
        <sequence resource="EMBL-CDS" id="AAL25391"/>
    </conflict>
    <text>Wrong choice of frame.</text>
</comment>
<evidence type="ECO:0000255" key="1">
    <source>
        <dbReference type="PROSITE-ProRule" id="PRU00176"/>
    </source>
</evidence>
<evidence type="ECO:0000256" key="2">
    <source>
        <dbReference type="SAM" id="MobiDB-lite"/>
    </source>
</evidence>
<evidence type="ECO:0000269" key="3">
    <source>
    </source>
</evidence>
<evidence type="ECO:0000269" key="4">
    <source>
    </source>
</evidence>
<evidence type="ECO:0000269" key="5">
    <source>
    </source>
</evidence>
<evidence type="ECO:0000269" key="6">
    <source>
    </source>
</evidence>
<evidence type="ECO:0000269" key="7">
    <source>
    </source>
</evidence>
<evidence type="ECO:0000269" key="8">
    <source>
    </source>
</evidence>
<evidence type="ECO:0000269" key="9">
    <source>
    </source>
</evidence>
<evidence type="ECO:0000269" key="10">
    <source>
    </source>
</evidence>
<evidence type="ECO:0000269" key="11">
    <source>
    </source>
</evidence>
<evidence type="ECO:0000269" key="12">
    <source>
    </source>
</evidence>
<evidence type="ECO:0000269" key="13">
    <source>
    </source>
</evidence>
<evidence type="ECO:0000269" key="14">
    <source>
    </source>
</evidence>
<evidence type="ECO:0000269" key="15">
    <source>
    </source>
</evidence>
<evidence type="ECO:0000269" key="16">
    <source>
    </source>
</evidence>
<evidence type="ECO:0000269" key="17">
    <source>
    </source>
</evidence>
<evidence type="ECO:0000269" key="18">
    <source>
    </source>
</evidence>
<evidence type="ECO:0000269" key="19">
    <source>
    </source>
</evidence>
<evidence type="ECO:0000269" key="20">
    <source>
    </source>
</evidence>
<evidence type="ECO:0000269" key="21">
    <source>
    </source>
</evidence>
<evidence type="ECO:0000269" key="22">
    <source>
    </source>
</evidence>
<evidence type="ECO:0000303" key="23">
    <source>
    </source>
</evidence>
<evidence type="ECO:0000303" key="24">
    <source>
    </source>
</evidence>
<evidence type="ECO:0000305" key="25"/>
<evidence type="ECO:0000305" key="26">
    <source>
    </source>
</evidence>
<evidence type="ECO:0000305" key="27">
    <source>
    </source>
</evidence>
<evidence type="ECO:0000305" key="28">
    <source>
    </source>
</evidence>
<evidence type="ECO:0000312" key="29">
    <source>
        <dbReference type="EMBL" id="AAF50350.1"/>
    </source>
</evidence>
<evidence type="ECO:0000312" key="30">
    <source>
        <dbReference type="EMBL" id="AAK93467.1"/>
    </source>
</evidence>
<evidence type="ECO:0000312" key="31">
    <source>
        <dbReference type="FlyBase" id="FBgn0264307"/>
    </source>
</evidence>
<evidence type="ECO:0007744" key="32">
    <source>
        <dbReference type="PDB" id="6VPS"/>
    </source>
</evidence>
<evidence type="ECO:0007829" key="33">
    <source>
        <dbReference type="PDB" id="6VPS"/>
    </source>
</evidence>
<protein>
    <recommendedName>
        <fullName>Translational regulator orb2</fullName>
    </recommendedName>
</protein>
<sequence length="704" mass="74504">MDSLKLPKANSATSSASGSNSNLSGSTSASASAATSPTSSGTAVGGILSGAPKSPPGLGSSTPISVRFNANEESLDDILQSFHHSKHSPSGGASGGGDASPTSNLLGMKNNGLGLVVGNCDSLSSSPSQPQMHAGSASLFGNDEVSLRNNFMQAGGFFNRKSCGGLPNLNLNKPPQLHQQQHQQQHQQHQQHQQQQQLHQHQQQLSPNLSALHHHHQQQQQLRESGGSHSPSSPGGGGGGSPYNGSQAGCSSGGISPIPPQMGVSPKYRRSISFPIKGNSPTAIYGNMHMDGMGSGHMNIPTLSIGNGGGGGSTGMVSAGATGGGDAPYLGNSYGNMMTSNGQMHHGGGLDNSLCDYMRNMSLGGNGGGDGSNSMSLMQDRMRVMGGPKHLSEADAMAIAASGNDPSVYLNALKMGSPSRLSPHSPHSPIQGGNGGNVGDGTARFSRKVFVGGLPPDIDEDEITTSFRRFGPLVVDWPHKAESKSYFPPKGYAFLLFQDESSVQQLIDSCITDEDKLYLCVSSPTIKDKAVQIRPWRLADADYVLDATMSLDPRKTVFVGGVPRPLKAFELAMIMDRLYGGVCYAGIDTDPELKYPKGAGRVAFSNQQSYIAAISARFVQLQHGDIDKRVEVKPYVLDDQMCDECEGQRCGGKFAPFFCANVTCLQYYCEHCWAVIHSRPGREYHKPLVKEGADRPRAVPFRWC</sequence>